<feature type="chain" id="PRO_1000097758" description="tRNA pseudouridine synthase A">
    <location>
        <begin position="1"/>
        <end position="246"/>
    </location>
</feature>
<feature type="active site" description="Nucleophile" evidence="1">
    <location>
        <position position="53"/>
    </location>
</feature>
<feature type="binding site" evidence="1">
    <location>
        <position position="111"/>
    </location>
    <ligand>
        <name>substrate</name>
    </ligand>
</feature>
<name>TRUA_LYSSC</name>
<organism>
    <name type="scientific">Lysinibacillus sphaericus (strain C3-41)</name>
    <dbReference type="NCBI Taxonomy" id="444177"/>
    <lineage>
        <taxon>Bacteria</taxon>
        <taxon>Bacillati</taxon>
        <taxon>Bacillota</taxon>
        <taxon>Bacilli</taxon>
        <taxon>Bacillales</taxon>
        <taxon>Bacillaceae</taxon>
        <taxon>Lysinibacillus</taxon>
    </lineage>
</organism>
<gene>
    <name evidence="1" type="primary">truA</name>
    <name type="ordered locus">Bsph_4584</name>
</gene>
<dbReference type="EC" id="5.4.99.12" evidence="1"/>
<dbReference type="EMBL" id="CP000817">
    <property type="protein sequence ID" value="ACA42028.1"/>
    <property type="molecule type" value="Genomic_DNA"/>
</dbReference>
<dbReference type="RefSeq" id="WP_012296047.1">
    <property type="nucleotide sequence ID" value="NC_010382.1"/>
</dbReference>
<dbReference type="SMR" id="B1HMV0"/>
<dbReference type="EnsemblBacteria" id="ACA42028">
    <property type="protein sequence ID" value="ACA42028"/>
    <property type="gene ID" value="Bsph_4584"/>
</dbReference>
<dbReference type="KEGG" id="lsp:Bsph_4584"/>
<dbReference type="HOGENOM" id="CLU_014673_0_1_9"/>
<dbReference type="Proteomes" id="UP000002164">
    <property type="component" value="Chromosome"/>
</dbReference>
<dbReference type="GO" id="GO:0003723">
    <property type="term" value="F:RNA binding"/>
    <property type="evidence" value="ECO:0007669"/>
    <property type="project" value="InterPro"/>
</dbReference>
<dbReference type="GO" id="GO:0160147">
    <property type="term" value="F:tRNA pseudouridine(38-40) synthase activity"/>
    <property type="evidence" value="ECO:0007669"/>
    <property type="project" value="UniProtKB-EC"/>
</dbReference>
<dbReference type="GO" id="GO:0031119">
    <property type="term" value="P:tRNA pseudouridine synthesis"/>
    <property type="evidence" value="ECO:0007669"/>
    <property type="project" value="UniProtKB-UniRule"/>
</dbReference>
<dbReference type="CDD" id="cd02570">
    <property type="entry name" value="PseudoU_synth_EcTruA"/>
    <property type="match status" value="1"/>
</dbReference>
<dbReference type="FunFam" id="3.30.70.580:FF:000001">
    <property type="entry name" value="tRNA pseudouridine synthase A"/>
    <property type="match status" value="1"/>
</dbReference>
<dbReference type="Gene3D" id="3.30.70.660">
    <property type="entry name" value="Pseudouridine synthase I, catalytic domain, C-terminal subdomain"/>
    <property type="match status" value="1"/>
</dbReference>
<dbReference type="Gene3D" id="3.30.70.580">
    <property type="entry name" value="Pseudouridine synthase I, catalytic domain, N-terminal subdomain"/>
    <property type="match status" value="1"/>
</dbReference>
<dbReference type="HAMAP" id="MF_00171">
    <property type="entry name" value="TruA"/>
    <property type="match status" value="1"/>
</dbReference>
<dbReference type="InterPro" id="IPR020103">
    <property type="entry name" value="PsdUridine_synth_cat_dom_sf"/>
</dbReference>
<dbReference type="InterPro" id="IPR001406">
    <property type="entry name" value="PsdUridine_synth_TruA"/>
</dbReference>
<dbReference type="InterPro" id="IPR020097">
    <property type="entry name" value="PsdUridine_synth_TruA_a/b_dom"/>
</dbReference>
<dbReference type="InterPro" id="IPR020095">
    <property type="entry name" value="PsdUridine_synth_TruA_C"/>
</dbReference>
<dbReference type="InterPro" id="IPR020094">
    <property type="entry name" value="TruA/RsuA/RluB/E/F_N"/>
</dbReference>
<dbReference type="NCBIfam" id="TIGR00071">
    <property type="entry name" value="hisT_truA"/>
    <property type="match status" value="1"/>
</dbReference>
<dbReference type="PANTHER" id="PTHR11142">
    <property type="entry name" value="PSEUDOURIDYLATE SYNTHASE"/>
    <property type="match status" value="1"/>
</dbReference>
<dbReference type="PANTHER" id="PTHR11142:SF0">
    <property type="entry name" value="TRNA PSEUDOURIDINE SYNTHASE-LIKE 1"/>
    <property type="match status" value="1"/>
</dbReference>
<dbReference type="Pfam" id="PF01416">
    <property type="entry name" value="PseudoU_synth_1"/>
    <property type="match status" value="2"/>
</dbReference>
<dbReference type="PIRSF" id="PIRSF001430">
    <property type="entry name" value="tRNA_psdUrid_synth"/>
    <property type="match status" value="1"/>
</dbReference>
<dbReference type="SUPFAM" id="SSF55120">
    <property type="entry name" value="Pseudouridine synthase"/>
    <property type="match status" value="1"/>
</dbReference>
<keyword id="KW-0413">Isomerase</keyword>
<keyword id="KW-0819">tRNA processing</keyword>
<reference key="1">
    <citation type="journal article" date="2008" name="J. Bacteriol.">
        <title>Complete genome sequence of the mosquitocidal bacterium Bacillus sphaericus C3-41 and comparison with those of closely related Bacillus species.</title>
        <authorList>
            <person name="Hu X."/>
            <person name="Fan W."/>
            <person name="Han B."/>
            <person name="Liu H."/>
            <person name="Zheng D."/>
            <person name="Li Q."/>
            <person name="Dong W."/>
            <person name="Yan J."/>
            <person name="Gao M."/>
            <person name="Berry C."/>
            <person name="Yuan Z."/>
        </authorList>
    </citation>
    <scope>NUCLEOTIDE SEQUENCE [LARGE SCALE GENOMIC DNA]</scope>
    <source>
        <strain>C3-41</strain>
    </source>
</reference>
<proteinExistence type="inferred from homology"/>
<sequence>MRRLKIIISYDGTHFSGYQVQPGERTVQAEIERVLAIMHKEEKVKVTASGRTDARVHATGQTLHFDTPLAIPTDKYRKALNVQLPRDIRVLSVEEVAHDFHARYSVTGKRYRYIWSCEPIQNPFRRHYTVDTNGVKPDVVAMQKAAQAIIGTHDFSCFCAANTSVQDKVRTVTSLQFEWHGEELHMVIEGNGFLYNMVRIIAGTLWEVGIDRRTIENIALVVASEDRDKAGKTAPPQGLYLEKVFY</sequence>
<comment type="function">
    <text evidence="1">Formation of pseudouridine at positions 38, 39 and 40 in the anticodon stem and loop of transfer RNAs.</text>
</comment>
<comment type="catalytic activity">
    <reaction evidence="1">
        <text>uridine(38/39/40) in tRNA = pseudouridine(38/39/40) in tRNA</text>
        <dbReference type="Rhea" id="RHEA:22376"/>
        <dbReference type="Rhea" id="RHEA-COMP:10085"/>
        <dbReference type="Rhea" id="RHEA-COMP:10087"/>
        <dbReference type="ChEBI" id="CHEBI:65314"/>
        <dbReference type="ChEBI" id="CHEBI:65315"/>
        <dbReference type="EC" id="5.4.99.12"/>
    </reaction>
</comment>
<comment type="subunit">
    <text evidence="1">Homodimer.</text>
</comment>
<comment type="similarity">
    <text evidence="1">Belongs to the tRNA pseudouridine synthase TruA family.</text>
</comment>
<accession>B1HMV0</accession>
<evidence type="ECO:0000255" key="1">
    <source>
        <dbReference type="HAMAP-Rule" id="MF_00171"/>
    </source>
</evidence>
<protein>
    <recommendedName>
        <fullName evidence="1">tRNA pseudouridine synthase A</fullName>
        <ecNumber evidence="1">5.4.99.12</ecNumber>
    </recommendedName>
    <alternativeName>
        <fullName evidence="1">tRNA pseudouridine(38-40) synthase</fullName>
    </alternativeName>
    <alternativeName>
        <fullName evidence="1">tRNA pseudouridylate synthase I</fullName>
    </alternativeName>
    <alternativeName>
        <fullName evidence="1">tRNA-uridine isomerase I</fullName>
    </alternativeName>
</protein>